<organism>
    <name type="scientific">Staphylococcus aureus (strain N315)</name>
    <dbReference type="NCBI Taxonomy" id="158879"/>
    <lineage>
        <taxon>Bacteria</taxon>
        <taxon>Bacillati</taxon>
        <taxon>Bacillota</taxon>
        <taxon>Bacilli</taxon>
        <taxon>Bacillales</taxon>
        <taxon>Staphylococcaceae</taxon>
        <taxon>Staphylococcus</taxon>
    </lineage>
</organism>
<sequence length="253" mass="29285">MCVVYRTSVLILLASGCSGVFDTPEDSKETQIKKSFAKTLDMYPIKNLEDLYDKEGYRDGEFKKGDKGTWVVRSEMIIQPKGKSLTSRGMILYMNRNTRTTTGYFSIEEIDSRKSLDERETEKKYPVKMINNKIIPTEEIKDEKLKKEIENFKFFVQYGSFKGIENYENGDISYNSEAPIYSAKYKLKNDDYNVKELRKRYNIPTEKAPKLLLKGSGDLKGSSVGYKEIEFIFIENKKENIYFSDGLNLIPSD</sequence>
<keyword id="KW-1003">Cell membrane</keyword>
<keyword id="KW-0449">Lipoprotein</keyword>
<keyword id="KW-0472">Membrane</keyword>
<keyword id="KW-0564">Palmitate</keyword>
<keyword id="KW-0732">Signal</keyword>
<proteinExistence type="inferred from homology"/>
<gene>
    <name type="ordered locus">SA0399</name>
</gene>
<comment type="subcellular location">
    <subcellularLocation>
        <location evidence="1">Cell membrane</location>
        <topology evidence="1">Lipid-anchor</topology>
    </subcellularLocation>
</comment>
<comment type="similarity">
    <text evidence="2">Belongs to the staphylococcal tandem lipoprotein family.</text>
</comment>
<comment type="sequence caution" evidence="2">
    <conflict type="erroneous initiation">
        <sequence resource="EMBL-CDS" id="BAB41628"/>
    </conflict>
</comment>
<protein>
    <recommendedName>
        <fullName>Uncharacterized lipoprotein SA0399</fullName>
    </recommendedName>
</protein>
<evidence type="ECO:0000255" key="1">
    <source>
        <dbReference type="PROSITE-ProRule" id="PRU00303"/>
    </source>
</evidence>
<evidence type="ECO:0000305" key="2"/>
<accession>Q7A7G3</accession>
<name>Y399_STAAN</name>
<feature type="signal peptide" evidence="1">
    <location>
        <begin position="1"/>
        <end position="16"/>
    </location>
</feature>
<feature type="chain" id="PRO_0000282145" description="Uncharacterized lipoprotein SA0399">
    <location>
        <begin position="17"/>
        <end position="253"/>
    </location>
</feature>
<feature type="lipid moiety-binding region" description="N-palmitoyl cysteine" evidence="1">
    <location>
        <position position="17"/>
    </location>
</feature>
<feature type="lipid moiety-binding region" description="S-diacylglycerol cysteine" evidence="1">
    <location>
        <position position="17"/>
    </location>
</feature>
<dbReference type="EMBL" id="BA000018">
    <property type="protein sequence ID" value="BAB41628.1"/>
    <property type="status" value="ALT_INIT"/>
    <property type="molecule type" value="Genomic_DNA"/>
</dbReference>
<dbReference type="PIR" id="A89809">
    <property type="entry name" value="A89809"/>
</dbReference>
<dbReference type="RefSeq" id="WP_001557593.1">
    <property type="nucleotide sequence ID" value="NC_002745.2"/>
</dbReference>
<dbReference type="SMR" id="Q7A7G3"/>
<dbReference type="EnsemblBacteria" id="BAB41628">
    <property type="protein sequence ID" value="BAB41628"/>
    <property type="gene ID" value="BAB41628"/>
</dbReference>
<dbReference type="KEGG" id="sau:SA0399"/>
<dbReference type="HOGENOM" id="CLU_071589_1_0_9"/>
<dbReference type="GO" id="GO:0005886">
    <property type="term" value="C:plasma membrane"/>
    <property type="evidence" value="ECO:0007669"/>
    <property type="project" value="UniProtKB-SubCell"/>
</dbReference>
<dbReference type="Gene3D" id="2.50.20.40">
    <property type="match status" value="1"/>
</dbReference>
<dbReference type="InterPro" id="IPR007595">
    <property type="entry name" value="Csa"/>
</dbReference>
<dbReference type="InterPro" id="IPR038641">
    <property type="entry name" value="Csa_sf"/>
</dbReference>
<dbReference type="NCBIfam" id="TIGR01742">
    <property type="entry name" value="SA_tandem_lipo"/>
    <property type="match status" value="1"/>
</dbReference>
<dbReference type="Pfam" id="PF04507">
    <property type="entry name" value="DUF576"/>
    <property type="match status" value="1"/>
</dbReference>
<dbReference type="PROSITE" id="PS51257">
    <property type="entry name" value="PROKAR_LIPOPROTEIN"/>
    <property type="match status" value="1"/>
</dbReference>
<reference key="1">
    <citation type="journal article" date="2001" name="Lancet">
        <title>Whole genome sequencing of meticillin-resistant Staphylococcus aureus.</title>
        <authorList>
            <person name="Kuroda M."/>
            <person name="Ohta T."/>
            <person name="Uchiyama I."/>
            <person name="Baba T."/>
            <person name="Yuzawa H."/>
            <person name="Kobayashi I."/>
            <person name="Cui L."/>
            <person name="Oguchi A."/>
            <person name="Aoki K."/>
            <person name="Nagai Y."/>
            <person name="Lian J.-Q."/>
            <person name="Ito T."/>
            <person name="Kanamori M."/>
            <person name="Matsumaru H."/>
            <person name="Maruyama A."/>
            <person name="Murakami H."/>
            <person name="Hosoyama A."/>
            <person name="Mizutani-Ui Y."/>
            <person name="Takahashi N.K."/>
            <person name="Sawano T."/>
            <person name="Inoue R."/>
            <person name="Kaito C."/>
            <person name="Sekimizu K."/>
            <person name="Hirakawa H."/>
            <person name="Kuhara S."/>
            <person name="Goto S."/>
            <person name="Yabuzaki J."/>
            <person name="Kanehisa M."/>
            <person name="Yamashita A."/>
            <person name="Oshima K."/>
            <person name="Furuya K."/>
            <person name="Yoshino C."/>
            <person name="Shiba T."/>
            <person name="Hattori M."/>
            <person name="Ogasawara N."/>
            <person name="Hayashi H."/>
            <person name="Hiramatsu K."/>
        </authorList>
    </citation>
    <scope>NUCLEOTIDE SEQUENCE [LARGE SCALE GENOMIC DNA]</scope>
    <source>
        <strain>N315</strain>
    </source>
</reference>